<accession>P0A9Q6</accession>
<accession>P08193</accession>
<accession>P76937</accession>
<accession>P78251</accession>
<protein>
    <recommendedName>
        <fullName evidence="1">Acetyl-coenzyme A carboxylase carboxyl transferase subunit beta</fullName>
        <shortName evidence="1">ACCase subunit beta</shortName>
        <shortName evidence="1">Acetyl-CoA carboxylase carboxyltransferase subunit beta</shortName>
        <ecNumber evidence="1">2.1.3.15</ecNumber>
    </recommendedName>
</protein>
<sequence>MSWIERIKSNITPTRKASIPEGVWTKCDSCGQVLYRAELERNLEVCPKCDHHMRMTARNRLHSLLDEGSLVELGSELEPKDVLKFRDSKKYKDRLASAQKETGEKDALVVMKGTLYGMPVVAAAFEFAFMGGSMGSVVGARFVRAVEQALEDNCPLICFSASGGARMQEALMSLMQMAKTSAALAKMQERGLPYISVLTDPTMGGVSASFAMLGDLNIAEPKALIGFAGPRVIEQTVREKLPPGFQRSEFLIEKGAIDMIVRRPEMRLKLASILAKLMNLPAPNPEAPREGVVVPPVPDQEPEA</sequence>
<dbReference type="EC" id="2.1.3.15" evidence="1"/>
<dbReference type="EMBL" id="AE005174">
    <property type="protein sequence ID" value="AAG57445.1"/>
    <property type="molecule type" value="Genomic_DNA"/>
</dbReference>
<dbReference type="EMBL" id="BA000007">
    <property type="protein sequence ID" value="BAB36623.1"/>
    <property type="molecule type" value="Genomic_DNA"/>
</dbReference>
<dbReference type="PIR" id="A85873">
    <property type="entry name" value="A85873"/>
</dbReference>
<dbReference type="PIR" id="H91028">
    <property type="entry name" value="H91028"/>
</dbReference>
<dbReference type="RefSeq" id="NP_311227.1">
    <property type="nucleotide sequence ID" value="NC_002695.1"/>
</dbReference>
<dbReference type="RefSeq" id="WP_000118404.1">
    <property type="nucleotide sequence ID" value="NZ_VOAI01000001.1"/>
</dbReference>
<dbReference type="SMR" id="P0A9Q6"/>
<dbReference type="STRING" id="155864.Z3578"/>
<dbReference type="GeneID" id="75202601"/>
<dbReference type="GeneID" id="916908"/>
<dbReference type="KEGG" id="ece:Z3578"/>
<dbReference type="KEGG" id="ecs:ECs_3200"/>
<dbReference type="PATRIC" id="fig|386585.9.peg.3340"/>
<dbReference type="eggNOG" id="COG0777">
    <property type="taxonomic scope" value="Bacteria"/>
</dbReference>
<dbReference type="HOGENOM" id="CLU_015486_1_0_6"/>
<dbReference type="OMA" id="PEGLWIK"/>
<dbReference type="UniPathway" id="UPA00655">
    <property type="reaction ID" value="UER00711"/>
</dbReference>
<dbReference type="Proteomes" id="UP000000558">
    <property type="component" value="Chromosome"/>
</dbReference>
<dbReference type="Proteomes" id="UP000002519">
    <property type="component" value="Chromosome"/>
</dbReference>
<dbReference type="GO" id="GO:0009329">
    <property type="term" value="C:acetate CoA-transferase complex"/>
    <property type="evidence" value="ECO:0007669"/>
    <property type="project" value="TreeGrafter"/>
</dbReference>
<dbReference type="GO" id="GO:0003989">
    <property type="term" value="F:acetyl-CoA carboxylase activity"/>
    <property type="evidence" value="ECO:0007669"/>
    <property type="project" value="InterPro"/>
</dbReference>
<dbReference type="GO" id="GO:0005524">
    <property type="term" value="F:ATP binding"/>
    <property type="evidence" value="ECO:0007669"/>
    <property type="project" value="UniProtKB-KW"/>
</dbReference>
<dbReference type="GO" id="GO:0016743">
    <property type="term" value="F:carboxyl- or carbamoyltransferase activity"/>
    <property type="evidence" value="ECO:0007669"/>
    <property type="project" value="UniProtKB-UniRule"/>
</dbReference>
<dbReference type="GO" id="GO:0008270">
    <property type="term" value="F:zinc ion binding"/>
    <property type="evidence" value="ECO:0007669"/>
    <property type="project" value="UniProtKB-UniRule"/>
</dbReference>
<dbReference type="GO" id="GO:0006633">
    <property type="term" value="P:fatty acid biosynthetic process"/>
    <property type="evidence" value="ECO:0007669"/>
    <property type="project" value="UniProtKB-KW"/>
</dbReference>
<dbReference type="GO" id="GO:2001295">
    <property type="term" value="P:malonyl-CoA biosynthetic process"/>
    <property type="evidence" value="ECO:0007669"/>
    <property type="project" value="UniProtKB-UniRule"/>
</dbReference>
<dbReference type="FunFam" id="3.90.226.10:FF:000013">
    <property type="entry name" value="Acetyl-coenzyme A carboxylase carboxyl transferase subunit beta"/>
    <property type="match status" value="1"/>
</dbReference>
<dbReference type="Gene3D" id="3.90.226.10">
    <property type="entry name" value="2-enoyl-CoA Hydratase, Chain A, domain 1"/>
    <property type="match status" value="1"/>
</dbReference>
<dbReference type="HAMAP" id="MF_01395">
    <property type="entry name" value="AcetylCoA_CT_beta"/>
    <property type="match status" value="1"/>
</dbReference>
<dbReference type="InterPro" id="IPR034733">
    <property type="entry name" value="AcCoA_carboxyl_beta"/>
</dbReference>
<dbReference type="InterPro" id="IPR000438">
    <property type="entry name" value="Acetyl_CoA_COase_Trfase_b_su"/>
</dbReference>
<dbReference type="InterPro" id="IPR029045">
    <property type="entry name" value="ClpP/crotonase-like_dom_sf"/>
</dbReference>
<dbReference type="InterPro" id="IPR011762">
    <property type="entry name" value="COA_CT_N"/>
</dbReference>
<dbReference type="InterPro" id="IPR041010">
    <property type="entry name" value="Znf-ACC"/>
</dbReference>
<dbReference type="NCBIfam" id="TIGR00515">
    <property type="entry name" value="accD"/>
    <property type="match status" value="1"/>
</dbReference>
<dbReference type="PANTHER" id="PTHR42995">
    <property type="entry name" value="ACETYL-COENZYME A CARBOXYLASE CARBOXYL TRANSFERASE SUBUNIT BETA, CHLOROPLASTIC"/>
    <property type="match status" value="1"/>
</dbReference>
<dbReference type="PANTHER" id="PTHR42995:SF5">
    <property type="entry name" value="ACETYL-COENZYME A CARBOXYLASE CARBOXYL TRANSFERASE SUBUNIT BETA, CHLOROPLASTIC"/>
    <property type="match status" value="1"/>
</dbReference>
<dbReference type="Pfam" id="PF01039">
    <property type="entry name" value="Carboxyl_trans"/>
    <property type="match status" value="1"/>
</dbReference>
<dbReference type="Pfam" id="PF17848">
    <property type="entry name" value="Zn_ribbon_ACC"/>
    <property type="match status" value="1"/>
</dbReference>
<dbReference type="PRINTS" id="PR01070">
    <property type="entry name" value="ACCCTRFRASEB"/>
</dbReference>
<dbReference type="SUPFAM" id="SSF52096">
    <property type="entry name" value="ClpP/crotonase"/>
    <property type="match status" value="1"/>
</dbReference>
<dbReference type="PROSITE" id="PS50980">
    <property type="entry name" value="COA_CT_NTER"/>
    <property type="match status" value="1"/>
</dbReference>
<reference key="1">
    <citation type="journal article" date="2001" name="Nature">
        <title>Genome sequence of enterohaemorrhagic Escherichia coli O157:H7.</title>
        <authorList>
            <person name="Perna N.T."/>
            <person name="Plunkett G. III"/>
            <person name="Burland V."/>
            <person name="Mau B."/>
            <person name="Glasner J.D."/>
            <person name="Rose D.J."/>
            <person name="Mayhew G.F."/>
            <person name="Evans P.S."/>
            <person name="Gregor J."/>
            <person name="Kirkpatrick H.A."/>
            <person name="Posfai G."/>
            <person name="Hackett J."/>
            <person name="Klink S."/>
            <person name="Boutin A."/>
            <person name="Shao Y."/>
            <person name="Miller L."/>
            <person name="Grotbeck E.J."/>
            <person name="Davis N.W."/>
            <person name="Lim A."/>
            <person name="Dimalanta E.T."/>
            <person name="Potamousis K."/>
            <person name="Apodaca J."/>
            <person name="Anantharaman T.S."/>
            <person name="Lin J."/>
            <person name="Yen G."/>
            <person name="Schwartz D.C."/>
            <person name="Welch R.A."/>
            <person name="Blattner F.R."/>
        </authorList>
    </citation>
    <scope>NUCLEOTIDE SEQUENCE [LARGE SCALE GENOMIC DNA]</scope>
    <source>
        <strain>O157:H7 / EDL933 / ATCC 700927 / EHEC</strain>
    </source>
</reference>
<reference key="2">
    <citation type="journal article" date="2001" name="DNA Res.">
        <title>Complete genome sequence of enterohemorrhagic Escherichia coli O157:H7 and genomic comparison with a laboratory strain K-12.</title>
        <authorList>
            <person name="Hayashi T."/>
            <person name="Makino K."/>
            <person name="Ohnishi M."/>
            <person name="Kurokawa K."/>
            <person name="Ishii K."/>
            <person name="Yokoyama K."/>
            <person name="Han C.-G."/>
            <person name="Ohtsubo E."/>
            <person name="Nakayama K."/>
            <person name="Murata T."/>
            <person name="Tanaka M."/>
            <person name="Tobe T."/>
            <person name="Iida T."/>
            <person name="Takami H."/>
            <person name="Honda T."/>
            <person name="Sasakawa C."/>
            <person name="Ogasawara N."/>
            <person name="Yasunaga T."/>
            <person name="Kuhara S."/>
            <person name="Shiba T."/>
            <person name="Hattori M."/>
            <person name="Shinagawa H."/>
        </authorList>
    </citation>
    <scope>NUCLEOTIDE SEQUENCE [LARGE SCALE GENOMIC DNA]</scope>
    <source>
        <strain>O157:H7 / Sakai / RIMD 0509952 / EHEC</strain>
    </source>
</reference>
<name>ACCD_ECO57</name>
<organism>
    <name type="scientific">Escherichia coli O157:H7</name>
    <dbReference type="NCBI Taxonomy" id="83334"/>
    <lineage>
        <taxon>Bacteria</taxon>
        <taxon>Pseudomonadati</taxon>
        <taxon>Pseudomonadota</taxon>
        <taxon>Gammaproteobacteria</taxon>
        <taxon>Enterobacterales</taxon>
        <taxon>Enterobacteriaceae</taxon>
        <taxon>Escherichia</taxon>
    </lineage>
</organism>
<feature type="chain" id="PRO_0000199771" description="Acetyl-coenzyme A carboxylase carboxyl transferase subunit beta">
    <location>
        <begin position="1"/>
        <end position="304"/>
    </location>
</feature>
<feature type="domain" description="CoA carboxyltransferase N-terminal" evidence="2">
    <location>
        <begin position="23"/>
        <end position="292"/>
    </location>
</feature>
<feature type="zinc finger region" description="C4-type" evidence="1">
    <location>
        <begin position="27"/>
        <end position="49"/>
    </location>
</feature>
<feature type="region of interest" description="Disordered" evidence="3">
    <location>
        <begin position="284"/>
        <end position="304"/>
    </location>
</feature>
<feature type="compositionally biased region" description="Pro residues" evidence="3">
    <location>
        <begin position="295"/>
        <end position="304"/>
    </location>
</feature>
<feature type="binding site" evidence="1">
    <location>
        <position position="27"/>
    </location>
    <ligand>
        <name>Zn(2+)</name>
        <dbReference type="ChEBI" id="CHEBI:29105"/>
    </ligand>
</feature>
<feature type="binding site" evidence="1">
    <location>
        <position position="30"/>
    </location>
    <ligand>
        <name>Zn(2+)</name>
        <dbReference type="ChEBI" id="CHEBI:29105"/>
    </ligand>
</feature>
<feature type="binding site" evidence="1">
    <location>
        <position position="46"/>
    </location>
    <ligand>
        <name>Zn(2+)</name>
        <dbReference type="ChEBI" id="CHEBI:29105"/>
    </ligand>
</feature>
<feature type="binding site" evidence="1">
    <location>
        <position position="49"/>
    </location>
    <ligand>
        <name>Zn(2+)</name>
        <dbReference type="ChEBI" id="CHEBI:29105"/>
    </ligand>
</feature>
<keyword id="KW-0067">ATP-binding</keyword>
<keyword id="KW-0963">Cytoplasm</keyword>
<keyword id="KW-0275">Fatty acid biosynthesis</keyword>
<keyword id="KW-0276">Fatty acid metabolism</keyword>
<keyword id="KW-0444">Lipid biosynthesis</keyword>
<keyword id="KW-0443">Lipid metabolism</keyword>
<keyword id="KW-0479">Metal-binding</keyword>
<keyword id="KW-0547">Nucleotide-binding</keyword>
<keyword id="KW-1185">Reference proteome</keyword>
<keyword id="KW-0808">Transferase</keyword>
<keyword id="KW-0862">Zinc</keyword>
<keyword id="KW-0863">Zinc-finger</keyword>
<evidence type="ECO:0000255" key="1">
    <source>
        <dbReference type="HAMAP-Rule" id="MF_01395"/>
    </source>
</evidence>
<evidence type="ECO:0000255" key="2">
    <source>
        <dbReference type="PROSITE-ProRule" id="PRU01136"/>
    </source>
</evidence>
<evidence type="ECO:0000256" key="3">
    <source>
        <dbReference type="SAM" id="MobiDB-lite"/>
    </source>
</evidence>
<gene>
    <name evidence="1" type="primary">accD</name>
    <name type="ordered locus">Z3578</name>
    <name type="ordered locus">ECs3200</name>
</gene>
<comment type="function">
    <text evidence="1">Component of the acetyl coenzyme A carboxylase (ACC) complex. Biotin carboxylase (BC) catalyzes the carboxylation of biotin on its carrier protein (BCCP) and then the CO(2) group is transferred by the transcarboxylase to acetyl-CoA to form malonyl-CoA.</text>
</comment>
<comment type="catalytic activity">
    <reaction evidence="1">
        <text>N(6)-carboxybiotinyl-L-lysyl-[protein] + acetyl-CoA = N(6)-biotinyl-L-lysyl-[protein] + malonyl-CoA</text>
        <dbReference type="Rhea" id="RHEA:54728"/>
        <dbReference type="Rhea" id="RHEA-COMP:10505"/>
        <dbReference type="Rhea" id="RHEA-COMP:10506"/>
        <dbReference type="ChEBI" id="CHEBI:57288"/>
        <dbReference type="ChEBI" id="CHEBI:57384"/>
        <dbReference type="ChEBI" id="CHEBI:83144"/>
        <dbReference type="ChEBI" id="CHEBI:83145"/>
        <dbReference type="EC" id="2.1.3.15"/>
    </reaction>
</comment>
<comment type="cofactor">
    <cofactor evidence="1">
        <name>Zn(2+)</name>
        <dbReference type="ChEBI" id="CHEBI:29105"/>
    </cofactor>
    <text evidence="1">Binds 1 zinc ion per subunit.</text>
</comment>
<comment type="pathway">
    <text evidence="1">Lipid metabolism; malonyl-CoA biosynthesis; malonyl-CoA from acetyl-CoA: step 1/1.</text>
</comment>
<comment type="subunit">
    <text evidence="1">Acetyl-CoA carboxylase is a heterohexamer composed of biotin carboxyl carrier protein (AccB), biotin carboxylase (AccC) and two subunits each of ACCase subunit alpha (AccA) and ACCase subunit beta (AccD).</text>
</comment>
<comment type="subcellular location">
    <subcellularLocation>
        <location evidence="1">Cytoplasm</location>
    </subcellularLocation>
</comment>
<comment type="similarity">
    <text evidence="1">Belongs to the AccD/PCCB family.</text>
</comment>
<proteinExistence type="inferred from homology"/>